<dbReference type="EMBL" id="AC004218">
    <property type="status" value="NOT_ANNOTATED_CDS"/>
    <property type="molecule type" value="Genomic_DNA"/>
</dbReference>
<dbReference type="EMBL" id="CP002685">
    <property type="protein sequence ID" value="AEC09672.1"/>
    <property type="molecule type" value="Genomic_DNA"/>
</dbReference>
<dbReference type="RefSeq" id="NP_973639.1">
    <property type="nucleotide sequence ID" value="NM_201910.2"/>
</dbReference>
<dbReference type="STRING" id="3702.Q3EBJ8"/>
<dbReference type="PaxDb" id="3702-AT2G39415.1"/>
<dbReference type="EnsemblPlants" id="AT2G39415.1">
    <property type="protein sequence ID" value="AT2G39415.1"/>
    <property type="gene ID" value="AT2G39415"/>
</dbReference>
<dbReference type="GeneID" id="2745587"/>
<dbReference type="Gramene" id="AT2G39415.1">
    <property type="protein sequence ID" value="AT2G39415.1"/>
    <property type="gene ID" value="AT2G39415"/>
</dbReference>
<dbReference type="KEGG" id="ath:AT2G39415"/>
<dbReference type="Araport" id="AT2G39415"/>
<dbReference type="TAIR" id="AT2G39415"/>
<dbReference type="HOGENOM" id="CLU_2064714_0_0_1"/>
<dbReference type="InParanoid" id="Q3EBJ8"/>
<dbReference type="OMA" id="CYAHHHY"/>
<dbReference type="PhylomeDB" id="Q3EBJ8"/>
<dbReference type="PRO" id="PR:Q3EBJ8"/>
<dbReference type="Proteomes" id="UP000006548">
    <property type="component" value="Chromosome 2"/>
</dbReference>
<dbReference type="ExpressionAtlas" id="Q3EBJ8">
    <property type="expression patterns" value="baseline and differential"/>
</dbReference>
<dbReference type="CDD" id="cd22160">
    <property type="entry name" value="F-box_AtFBL13-like"/>
    <property type="match status" value="1"/>
</dbReference>
<dbReference type="Gene3D" id="1.20.1280.50">
    <property type="match status" value="1"/>
</dbReference>
<dbReference type="InterPro" id="IPR036047">
    <property type="entry name" value="F-box-like_dom_sf"/>
</dbReference>
<dbReference type="InterPro" id="IPR053781">
    <property type="entry name" value="F-box_AtFBL13-like"/>
</dbReference>
<dbReference type="InterPro" id="IPR001810">
    <property type="entry name" value="F-box_dom"/>
</dbReference>
<dbReference type="InterPro" id="IPR055294">
    <property type="entry name" value="FBL60-like"/>
</dbReference>
<dbReference type="PANTHER" id="PTHR31293">
    <property type="entry name" value="RNI-LIKE SUPERFAMILY PROTEIN"/>
    <property type="match status" value="1"/>
</dbReference>
<dbReference type="PANTHER" id="PTHR31293:SF12">
    <property type="entry name" value="RNI-LIKE SUPERFAMILY PROTEIN"/>
    <property type="match status" value="1"/>
</dbReference>
<dbReference type="Pfam" id="PF00646">
    <property type="entry name" value="F-box"/>
    <property type="match status" value="1"/>
</dbReference>
<dbReference type="SUPFAM" id="SSF81383">
    <property type="entry name" value="F-box domain"/>
    <property type="match status" value="1"/>
</dbReference>
<dbReference type="PROSITE" id="PS50181">
    <property type="entry name" value="FBOX"/>
    <property type="match status" value="1"/>
</dbReference>
<evidence type="ECO:0000255" key="1">
    <source>
        <dbReference type="PROSITE-ProRule" id="PRU00080"/>
    </source>
</evidence>
<gene>
    <name type="ordered locus">At2g39415</name>
    <name type="ORF">F12L6.27</name>
</gene>
<name>FB128_ARATH</name>
<accession>Q3EBJ8</accession>
<proteinExistence type="predicted"/>
<protein>
    <recommendedName>
        <fullName>Putative F-box protein At2g39415</fullName>
    </recommendedName>
</protein>
<keyword id="KW-1185">Reference proteome</keyword>
<feature type="chain" id="PRO_0000283399" description="Putative F-box protein At2g39415">
    <location>
        <begin position="1"/>
        <end position="119"/>
    </location>
</feature>
<feature type="domain" description="F-box" evidence="1">
    <location>
        <begin position="37"/>
        <end position="92"/>
    </location>
</feature>
<sequence length="119" mass="13331">MAEADDGGNGDGATAGDCYAHHHYRDVKLARDASENIDSISSLPDVILQQILSSLPTNLAIRTSVLSTRWRHVWSDTPYIYFDGPGTLYRGLKADTINKTLARYKLPKIMSFHLYTKIF</sequence>
<reference key="1">
    <citation type="journal article" date="1999" name="Nature">
        <title>Sequence and analysis of chromosome 2 of the plant Arabidopsis thaliana.</title>
        <authorList>
            <person name="Lin X."/>
            <person name="Kaul S."/>
            <person name="Rounsley S.D."/>
            <person name="Shea T.P."/>
            <person name="Benito M.-I."/>
            <person name="Town C.D."/>
            <person name="Fujii C.Y."/>
            <person name="Mason T.M."/>
            <person name="Bowman C.L."/>
            <person name="Barnstead M.E."/>
            <person name="Feldblyum T.V."/>
            <person name="Buell C.R."/>
            <person name="Ketchum K.A."/>
            <person name="Lee J.J."/>
            <person name="Ronning C.M."/>
            <person name="Koo H.L."/>
            <person name="Moffat K.S."/>
            <person name="Cronin L.A."/>
            <person name="Shen M."/>
            <person name="Pai G."/>
            <person name="Van Aken S."/>
            <person name="Umayam L."/>
            <person name="Tallon L.J."/>
            <person name="Gill J.E."/>
            <person name="Adams M.D."/>
            <person name="Carrera A.J."/>
            <person name="Creasy T.H."/>
            <person name="Goodman H.M."/>
            <person name="Somerville C.R."/>
            <person name="Copenhaver G.P."/>
            <person name="Preuss D."/>
            <person name="Nierman W.C."/>
            <person name="White O."/>
            <person name="Eisen J.A."/>
            <person name="Salzberg S.L."/>
            <person name="Fraser C.M."/>
            <person name="Venter J.C."/>
        </authorList>
    </citation>
    <scope>NUCLEOTIDE SEQUENCE [LARGE SCALE GENOMIC DNA]</scope>
    <source>
        <strain>cv. Columbia</strain>
    </source>
</reference>
<reference key="2">
    <citation type="journal article" date="2017" name="Plant J.">
        <title>Araport11: a complete reannotation of the Arabidopsis thaliana reference genome.</title>
        <authorList>
            <person name="Cheng C.Y."/>
            <person name="Krishnakumar V."/>
            <person name="Chan A.P."/>
            <person name="Thibaud-Nissen F."/>
            <person name="Schobel S."/>
            <person name="Town C.D."/>
        </authorList>
    </citation>
    <scope>GENOME REANNOTATION</scope>
    <source>
        <strain>cv. Columbia</strain>
    </source>
</reference>
<organism>
    <name type="scientific">Arabidopsis thaliana</name>
    <name type="common">Mouse-ear cress</name>
    <dbReference type="NCBI Taxonomy" id="3702"/>
    <lineage>
        <taxon>Eukaryota</taxon>
        <taxon>Viridiplantae</taxon>
        <taxon>Streptophyta</taxon>
        <taxon>Embryophyta</taxon>
        <taxon>Tracheophyta</taxon>
        <taxon>Spermatophyta</taxon>
        <taxon>Magnoliopsida</taxon>
        <taxon>eudicotyledons</taxon>
        <taxon>Gunneridae</taxon>
        <taxon>Pentapetalae</taxon>
        <taxon>rosids</taxon>
        <taxon>malvids</taxon>
        <taxon>Brassicales</taxon>
        <taxon>Brassicaceae</taxon>
        <taxon>Camelineae</taxon>
        <taxon>Arabidopsis</taxon>
    </lineage>
</organism>